<sequence length="42" mass="4278">MSNVGTTGRIPLWFIGVIAGIAALSIVGLFFYGAYSGLGSSL</sequence>
<comment type="function">
    <text evidence="1">One of the components of the core complex of photosystem II (PSII). PSII is a light-driven water:plastoquinone oxidoreductase that uses light energy to abstract electrons from H(2)O, generating O(2) and a proton gradient subsequently used for ATP formation. It consists of a core antenna complex that captures photons, and an electron transfer chain that converts photonic excitation into a charge separation.</text>
</comment>
<comment type="subunit">
    <text evidence="1">PSII is composed of 1 copy each of membrane proteins PsbA, PsbB, PsbC, PsbD, PsbE, PsbF, PsbH, PsbI, PsbJ, PsbK, PsbL, PsbM, PsbT, PsbX, PsbY, PsbZ, Psb30/Ycf12, at least 3 peripheral proteins of the oxygen-evolving complex and a large number of cofactors. It forms dimeric complexes.</text>
</comment>
<comment type="subcellular location">
    <subcellularLocation>
        <location evidence="1">Plastid</location>
        <location evidence="1">Chloroplast thylakoid membrane</location>
        <topology evidence="1">Single-pass membrane protein</topology>
    </subcellularLocation>
</comment>
<comment type="similarity">
    <text evidence="1">Belongs to the PsbJ family.</text>
</comment>
<reference key="1">
    <citation type="journal article" date="2005" name="BMC Biol.">
        <title>The complete chloroplast DNA sequences of the charophycean green algae Staurastrum and Zygnema reveal that the chloroplast genome underwent extensive changes during the evolution of the Zygnematales.</title>
        <authorList>
            <person name="Turmel M."/>
            <person name="Otis C."/>
            <person name="Lemieux C."/>
        </authorList>
    </citation>
    <scope>NUCLEOTIDE SEQUENCE [LARGE SCALE GENOMIC DNA]</scope>
</reference>
<evidence type="ECO:0000255" key="1">
    <source>
        <dbReference type="HAMAP-Rule" id="MF_01305"/>
    </source>
</evidence>
<proteinExistence type="inferred from homology"/>
<accession>Q32RJ8</accession>
<gene>
    <name evidence="1" type="primary">psbJ</name>
</gene>
<feature type="chain" id="PRO_0000276120" description="Photosystem II reaction center protein J">
    <location>
        <begin position="1"/>
        <end position="42"/>
    </location>
</feature>
<feature type="transmembrane region" description="Helical" evidence="1">
    <location>
        <begin position="10"/>
        <end position="30"/>
    </location>
</feature>
<name>PSBJ_ZYGCR</name>
<organism>
    <name type="scientific">Zygnema circumcarinatum</name>
    <name type="common">Green alga</name>
    <dbReference type="NCBI Taxonomy" id="35869"/>
    <lineage>
        <taxon>Eukaryota</taxon>
        <taxon>Viridiplantae</taxon>
        <taxon>Streptophyta</taxon>
        <taxon>Zygnematophyceae</taxon>
        <taxon>Zygnematophycidae</taxon>
        <taxon>Zygnematales</taxon>
        <taxon>Zygnemataceae</taxon>
        <taxon>Zygnema</taxon>
    </lineage>
</organism>
<dbReference type="EMBL" id="AY958086">
    <property type="protein sequence ID" value="AAX45844.1"/>
    <property type="molecule type" value="Genomic_DNA"/>
</dbReference>
<dbReference type="RefSeq" id="YP_636528.1">
    <property type="nucleotide sequence ID" value="NC_008117.1"/>
</dbReference>
<dbReference type="SMR" id="Q32RJ8"/>
<dbReference type="GeneID" id="4108164"/>
<dbReference type="GO" id="GO:0009535">
    <property type="term" value="C:chloroplast thylakoid membrane"/>
    <property type="evidence" value="ECO:0007669"/>
    <property type="project" value="UniProtKB-SubCell"/>
</dbReference>
<dbReference type="GO" id="GO:0009539">
    <property type="term" value="C:photosystem II reaction center"/>
    <property type="evidence" value="ECO:0007669"/>
    <property type="project" value="InterPro"/>
</dbReference>
<dbReference type="GO" id="GO:0015979">
    <property type="term" value="P:photosynthesis"/>
    <property type="evidence" value="ECO:0007669"/>
    <property type="project" value="UniProtKB-UniRule"/>
</dbReference>
<dbReference type="Gene3D" id="6.10.250.2070">
    <property type="match status" value="1"/>
</dbReference>
<dbReference type="HAMAP" id="MF_01305">
    <property type="entry name" value="PSII_PsbJ"/>
    <property type="match status" value="1"/>
</dbReference>
<dbReference type="InterPro" id="IPR002682">
    <property type="entry name" value="PSII_PsbJ"/>
</dbReference>
<dbReference type="InterPro" id="IPR037267">
    <property type="entry name" value="PSII_PsbJ_sf"/>
</dbReference>
<dbReference type="NCBIfam" id="NF002722">
    <property type="entry name" value="PRK02565.1"/>
    <property type="match status" value="1"/>
</dbReference>
<dbReference type="PANTHER" id="PTHR34812">
    <property type="entry name" value="PHOTOSYSTEM II REACTION CENTER PROTEIN J"/>
    <property type="match status" value="1"/>
</dbReference>
<dbReference type="PANTHER" id="PTHR34812:SF3">
    <property type="entry name" value="PHOTOSYSTEM II REACTION CENTER PROTEIN J"/>
    <property type="match status" value="1"/>
</dbReference>
<dbReference type="Pfam" id="PF01788">
    <property type="entry name" value="PsbJ"/>
    <property type="match status" value="1"/>
</dbReference>
<dbReference type="SUPFAM" id="SSF161021">
    <property type="entry name" value="Photosystem II reaction center protein J, PsbJ"/>
    <property type="match status" value="1"/>
</dbReference>
<geneLocation type="chloroplast"/>
<protein>
    <recommendedName>
        <fullName evidence="1">Photosystem II reaction center protein J</fullName>
        <shortName evidence="1">PSII-J</shortName>
    </recommendedName>
</protein>
<keyword id="KW-0150">Chloroplast</keyword>
<keyword id="KW-0472">Membrane</keyword>
<keyword id="KW-0602">Photosynthesis</keyword>
<keyword id="KW-0604">Photosystem II</keyword>
<keyword id="KW-0934">Plastid</keyword>
<keyword id="KW-0674">Reaction center</keyword>
<keyword id="KW-0793">Thylakoid</keyword>
<keyword id="KW-0812">Transmembrane</keyword>
<keyword id="KW-1133">Transmembrane helix</keyword>